<evidence type="ECO:0000250" key="1">
    <source>
        <dbReference type="UniProtKB" id="Q62463"/>
    </source>
</evidence>
<evidence type="ECO:0000255" key="2"/>
<evidence type="ECO:0000255" key="3">
    <source>
        <dbReference type="PROSITE-ProRule" id="PRU00521"/>
    </source>
</evidence>
<evidence type="ECO:0000256" key="4">
    <source>
        <dbReference type="SAM" id="MobiDB-lite"/>
    </source>
</evidence>
<evidence type="ECO:0000269" key="5">
    <source>
    </source>
</evidence>
<evidence type="ECO:0000269" key="6">
    <source>
    </source>
</evidence>
<evidence type="ECO:0000269" key="7">
    <source>
    </source>
</evidence>
<evidence type="ECO:0000269" key="8">
    <source>
    </source>
</evidence>
<evidence type="ECO:0000269" key="9">
    <source>
    </source>
</evidence>
<evidence type="ECO:0000269" key="10">
    <source>
    </source>
</evidence>
<evidence type="ECO:0000305" key="11"/>
<reference key="1">
    <citation type="journal article" date="1992" name="Nature">
        <title>Molecular cloning and expression of a rat V1a arginine vasopressin receptor.</title>
        <authorList>
            <person name="Morel A."/>
            <person name="O'Carroll A.-M."/>
            <person name="Brownstein M.J."/>
            <person name="Lolait S.J."/>
        </authorList>
    </citation>
    <scope>NUCLEOTIDE SEQUENCE [MRNA]</scope>
    <source>
        <strain>Sprague-Dawley</strain>
        <tissue>Liver</tissue>
    </source>
</reference>
<reference key="2">
    <citation type="journal article" date="1993" name="Biochem. J.">
        <title>Homology between neurohypophyseal hormone receptors.</title>
        <authorList>
            <person name="Wheatley M."/>
            <person name="Howl J."/>
            <person name="Morel A."/>
            <person name="Davis A.R.L."/>
        </authorList>
    </citation>
    <scope>SEQUENCE REVISION TO 112-117</scope>
</reference>
<reference key="3">
    <citation type="journal article" date="1996" name="Biochem. J.">
        <title>Sequence identity between the rat and human vasopressin V1a receptors.</title>
        <authorList>
            <person name="Innamorati G."/>
            <person name="Lolait S.J."/>
            <person name="Birnbaumer M."/>
        </authorList>
    </citation>
    <scope>NUCLEOTIDE SEQUENCE [GENOMIC DNA]</scope>
    <source>
        <tissue>Liver</tissue>
    </source>
</reference>
<reference key="4">
    <citation type="journal article" date="2004" name="Genome Res.">
        <title>The status, quality, and expansion of the NIH full-length cDNA project: the Mammalian Gene Collection (MGC).</title>
        <authorList>
            <consortium name="The MGC Project Team"/>
        </authorList>
    </citation>
    <scope>NUCLEOTIDE SEQUENCE [LARGE SCALE MRNA]</scope>
    <source>
        <tissue>Liver</tissue>
    </source>
</reference>
<reference key="5">
    <citation type="journal article" date="1993" name="Regul. Pept.">
        <title>Molecular cloning and expression of rat V1a and V2 arginine vasopressin receptors.</title>
        <authorList>
            <person name="Morel A."/>
            <person name="Lolait S.J."/>
            <person name="Brownstein M.J."/>
        </authorList>
    </citation>
    <scope>NUCLEOTIDE SEQUENCE [MRNA] OF 1-395</scope>
</reference>
<reference key="6">
    <citation type="journal article" date="1995" name="EMBO J.">
        <title>Tyr115 is the key residue for determining agonist selectivity in the V1a vasopressin receptor.</title>
        <authorList>
            <person name="Chini B."/>
            <person name="Mouillac B."/>
            <person name="Ala Y."/>
            <person name="Balestre M.-N."/>
            <person name="Trumpp-Kallmeyer S."/>
            <person name="Hoflack J."/>
            <person name="Elands J."/>
            <person name="Hibert M."/>
            <person name="Manning M."/>
            <person name="Jard S."/>
            <person name="Barberis C."/>
        </authorList>
    </citation>
    <scope>MUTAGENESIS OF TYR-115</scope>
</reference>
<reference key="7">
    <citation type="journal article" date="1997" name="Brain Res. Mol. Brain Res.">
        <title>Localization of V1a vasopressin receptor mRNA expression in cultured neurons, astroglia, and oligodendroglia of rat cerebral cortex.</title>
        <authorList>
            <person name="Yamazaki R.S."/>
            <person name="Chen Q."/>
            <person name="Schreiber S.S."/>
            <person name="Brinton R.D."/>
        </authorList>
    </citation>
    <scope>TISSUE SPECIFICITY</scope>
</reference>
<reference key="8">
    <citation type="journal article" date="2001" name="Biochem. Biophys. Res. Commun.">
        <title>Effect of N-glycosylation on ligand binding affinity of rat V1a vasopressin receptor.</title>
        <authorList>
            <person name="Lee K.-H."/>
            <person name="Ahn J."/>
            <person name="Yu D.-H."/>
            <person name="Jeong H.-S."/>
            <person name="Lee S.-H."/>
            <person name="Kim K.-S."/>
            <person name="Chung I.-Y."/>
            <person name="Kim J.-H."/>
            <person name="Lee Y.-S."/>
        </authorList>
    </citation>
    <scope>MUTAGENESIS OF ASN-14 AND ASN-27</scope>
    <scope>SUBCELLULAR LOCATION</scope>
</reference>
<reference key="9">
    <citation type="journal article" date="2001" name="J. Biol. Chem.">
        <title>Palmitoylation of the vasopressin V1a receptor reveals different conformational requirements for signaling, agonist-induced receptor phosphorylation, and sequestration.</title>
        <authorList>
            <person name="Hawtin S.R."/>
            <person name="Tobin A.B."/>
            <person name="Patel S."/>
            <person name="Wheatley M."/>
        </authorList>
    </citation>
    <scope>PALMITOYLATION AT CYS-371 AND CYS-372</scope>
    <scope>MUTAGENESIS OF CYS-371 AND CYS-372</scope>
</reference>
<reference key="10">
    <citation type="journal article" date="2002" name="Endocrinology">
        <title>Immunocytochemical localization of vasopressin v1a receptors in the rat pituitary gonadotropes.</title>
        <authorList>
            <person name="Orcel H."/>
            <person name="Tobin V.A."/>
            <person name="Alonso G."/>
            <person name="Rabie A."/>
        </authorList>
    </citation>
    <scope>SUBCELLULAR LOCATION</scope>
    <scope>TISSUE SPECIFICITY</scope>
</reference>
<reference key="11">
    <citation type="journal article" date="2003" name="Eur. J. Neurosci.">
        <title>Viral vector-mediated gene transfer of the vole V1a vasopressin receptor in the rat septum: improved social discrimination and active social behaviour.</title>
        <authorList>
            <person name="Landgraf R."/>
            <person name="Frank E."/>
            <person name="Aldag J.M."/>
            <person name="Neumann I.D."/>
            <person name="Sharer C.A."/>
            <person name="Ren X."/>
            <person name="Terwilliger E.F."/>
            <person name="Niwa M."/>
            <person name="Wigger A."/>
            <person name="Young L.J."/>
        </authorList>
    </citation>
    <scope>ROLE IN SOCIAL BEHAVIOR</scope>
</reference>
<gene>
    <name type="primary">Avpr1a</name>
</gene>
<comment type="function">
    <text evidence="8">Receptor for arginine vasopressin. The activity of this receptor is mediated by G proteins which activate a phosphatidyl-inositol-calcium second messenger system. Involved in social memory formation.</text>
</comment>
<comment type="subcellular location">
    <subcellularLocation>
        <location>Cell membrane</location>
        <topology>Multi-pass membrane protein</topology>
    </subcellularLocation>
    <subcellularLocation>
        <location>Cytoplasmic vesicle membrane</location>
        <topology>Multi-pass membrane protein</topology>
    </subcellularLocation>
    <text>Located in cytoplasmic vesicles dispersed throughout the cell cytoplasm and to the plasma membrane.</text>
</comment>
<comment type="tissue specificity">
    <text evidence="7 10">Localized within gonadotropes of the anterior pituitary of the brain. Broadly distributed throughout the cerebral cortex.</text>
</comment>
<comment type="PTM">
    <text evidence="5">Palmitoylated on three cysteine residues, of which only two are identified.</text>
</comment>
<comment type="miscellaneous">
    <text>Overexpression of AVPR1A in the brain increases the duration of social memory.</text>
</comment>
<comment type="similarity">
    <text evidence="3">Belongs to the G-protein coupled receptor 1 family. Vasopressin/oxytocin receptor subfamily.</text>
</comment>
<comment type="sequence caution" evidence="11">
    <conflict type="erroneous initiation">
        <sequence resource="EMBL-CDS" id="CAA77748"/>
    </conflict>
</comment>
<organism>
    <name type="scientific">Rattus norvegicus</name>
    <name type="common">Rat</name>
    <dbReference type="NCBI Taxonomy" id="10116"/>
    <lineage>
        <taxon>Eukaryota</taxon>
        <taxon>Metazoa</taxon>
        <taxon>Chordata</taxon>
        <taxon>Craniata</taxon>
        <taxon>Vertebrata</taxon>
        <taxon>Euteleostomi</taxon>
        <taxon>Mammalia</taxon>
        <taxon>Eutheria</taxon>
        <taxon>Euarchontoglires</taxon>
        <taxon>Glires</taxon>
        <taxon>Rodentia</taxon>
        <taxon>Myomorpha</taxon>
        <taxon>Muroidea</taxon>
        <taxon>Muridae</taxon>
        <taxon>Murinae</taxon>
        <taxon>Rattus</taxon>
    </lineage>
</organism>
<sequence>MSFPRGSQDRSVGNSSPWWPLTTEGSNGSQEAARLGEGDSPLGDVRNEELAKLEIAVLAVIFVVAVLGNSSVLLALHRTPRKTSRMHLFIRHLSLADLAVAFFQVLPQLCWDITYRFRGPDWLCRVVKHLQVFAMFASAYMLVVMTADRYIAVCHPLKTLQQPARRSRLMIATSWVLSFILSTPQYFIFSVIEIEVNNGTKTQDCWATFIQPWGTRAYVTWMTSGVFVAPVVVLGTCYGFICYHIWRNIRGKTASSRHSKGDKGSGEAVGPFHKGLLVTPCVSSVKSISRAKIRTVKMTFVIVSAYILCWAPFFIVQMWSVWDENFIWTDSENPSITITALLASLNSCCNPWIYMFFSGHLLQDCVQSFPCCHSMAQKFAKDDSDSMSRRQTSYSNNRSPTNSTGMWKDSPKSSKSIRFIPVST</sequence>
<dbReference type="EMBL" id="Z11690">
    <property type="protein sequence ID" value="CAA77748.1"/>
    <property type="status" value="ALT_INIT"/>
    <property type="molecule type" value="mRNA"/>
</dbReference>
<dbReference type="EMBL" id="U39450">
    <property type="protein sequence ID" value="AAC52507.1"/>
    <property type="molecule type" value="Genomic_DNA"/>
</dbReference>
<dbReference type="EMBL" id="BC088095">
    <property type="protein sequence ID" value="AAH88095.1"/>
    <property type="molecule type" value="Genomic_DNA"/>
</dbReference>
<dbReference type="PIR" id="S71837">
    <property type="entry name" value="S71837"/>
</dbReference>
<dbReference type="RefSeq" id="NP_444178.2">
    <property type="nucleotide sequence ID" value="NM_053019.2"/>
</dbReference>
<dbReference type="SMR" id="P30560"/>
<dbReference type="FunCoup" id="P30560">
    <property type="interactions" value="105"/>
</dbReference>
<dbReference type="IntAct" id="P30560">
    <property type="interactions" value="2"/>
</dbReference>
<dbReference type="STRING" id="10116.ENSRNOP00000005829"/>
<dbReference type="BindingDB" id="P30560"/>
<dbReference type="ChEMBL" id="CHEMBL2868"/>
<dbReference type="DrugCentral" id="P30560"/>
<dbReference type="GuidetoPHARMACOLOGY" id="366"/>
<dbReference type="GlyCosmos" id="P30560">
    <property type="glycosylation" value="1 site, No reported glycans"/>
</dbReference>
<dbReference type="GlyGen" id="P30560">
    <property type="glycosylation" value="1 site"/>
</dbReference>
<dbReference type="PhosphoSitePlus" id="P30560"/>
<dbReference type="SwissPalm" id="P30560"/>
<dbReference type="PaxDb" id="10116-ENSRNOP00000005829"/>
<dbReference type="Ensembl" id="ENSRNOT00000005829.6">
    <property type="protein sequence ID" value="ENSRNOP00000005829.3"/>
    <property type="gene ID" value="ENSRNOG00000004400.6"/>
</dbReference>
<dbReference type="GeneID" id="25107"/>
<dbReference type="KEGG" id="rno:25107"/>
<dbReference type="AGR" id="RGD:2185"/>
<dbReference type="CTD" id="552"/>
<dbReference type="RGD" id="2185">
    <property type="gene designation" value="Avpr1a"/>
</dbReference>
<dbReference type="eggNOG" id="KOG3656">
    <property type="taxonomic scope" value="Eukaryota"/>
</dbReference>
<dbReference type="GeneTree" id="ENSGT01050000244882"/>
<dbReference type="InParanoid" id="P30560"/>
<dbReference type="OMA" id="QYFIFSM"/>
<dbReference type="OrthoDB" id="6435638at2759"/>
<dbReference type="PhylomeDB" id="P30560"/>
<dbReference type="TreeFam" id="TF106499"/>
<dbReference type="Reactome" id="R-RNO-388479">
    <property type="pathway name" value="Vasopressin-like receptors"/>
</dbReference>
<dbReference type="Reactome" id="R-RNO-416476">
    <property type="pathway name" value="G alpha (q) signalling events"/>
</dbReference>
<dbReference type="PRO" id="PR:P30560"/>
<dbReference type="Proteomes" id="UP000002494">
    <property type="component" value="Chromosome 7"/>
</dbReference>
<dbReference type="Bgee" id="ENSRNOG00000004400">
    <property type="expression patterns" value="Expressed in liver and 17 other cell types or tissues"/>
</dbReference>
<dbReference type="ExpressionAtlas" id="P30560">
    <property type="expression patterns" value="baseline and differential"/>
</dbReference>
<dbReference type="GO" id="GO:0030659">
    <property type="term" value="C:cytoplasmic vesicle membrane"/>
    <property type="evidence" value="ECO:0007669"/>
    <property type="project" value="UniProtKB-SubCell"/>
</dbReference>
<dbReference type="GO" id="GO:0030139">
    <property type="term" value="C:endocytic vesicle"/>
    <property type="evidence" value="ECO:0000266"/>
    <property type="project" value="RGD"/>
</dbReference>
<dbReference type="GO" id="GO:0005768">
    <property type="term" value="C:endosome"/>
    <property type="evidence" value="ECO:0000266"/>
    <property type="project" value="RGD"/>
</dbReference>
<dbReference type="GO" id="GO:0016020">
    <property type="term" value="C:membrane"/>
    <property type="evidence" value="ECO:0000303"/>
    <property type="project" value="UniProtKB"/>
</dbReference>
<dbReference type="GO" id="GO:0005886">
    <property type="term" value="C:plasma membrane"/>
    <property type="evidence" value="ECO:0000266"/>
    <property type="project" value="RGD"/>
</dbReference>
<dbReference type="GO" id="GO:0017046">
    <property type="term" value="F:peptide hormone binding"/>
    <property type="evidence" value="ECO:0000315"/>
    <property type="project" value="RGD"/>
</dbReference>
<dbReference type="GO" id="GO:0031894">
    <property type="term" value="F:V1A vasopressin receptor binding"/>
    <property type="evidence" value="ECO:0000314"/>
    <property type="project" value="UniProtKB"/>
</dbReference>
<dbReference type="GO" id="GO:0005000">
    <property type="term" value="F:vasopressin receptor activity"/>
    <property type="evidence" value="ECO:0000314"/>
    <property type="project" value="RGD"/>
</dbReference>
<dbReference type="GO" id="GO:0019722">
    <property type="term" value="P:calcium-mediated signaling"/>
    <property type="evidence" value="ECO:0000315"/>
    <property type="project" value="RGD"/>
</dbReference>
<dbReference type="GO" id="GO:0032870">
    <property type="term" value="P:cellular response to hormone stimulus"/>
    <property type="evidence" value="ECO:0000318"/>
    <property type="project" value="GO_Central"/>
</dbReference>
<dbReference type="GO" id="GO:0042631">
    <property type="term" value="P:cellular response to water deprivation"/>
    <property type="evidence" value="ECO:0000270"/>
    <property type="project" value="RGD"/>
</dbReference>
<dbReference type="GO" id="GO:0007186">
    <property type="term" value="P:G protein-coupled receptor signaling pathway"/>
    <property type="evidence" value="ECO:0000266"/>
    <property type="project" value="RGD"/>
</dbReference>
<dbReference type="GO" id="GO:0007625">
    <property type="term" value="P:grooming behavior"/>
    <property type="evidence" value="ECO:0000315"/>
    <property type="project" value="RGD"/>
</dbReference>
<dbReference type="GO" id="GO:0002125">
    <property type="term" value="P:maternal aggressive behavior"/>
    <property type="evidence" value="ECO:0000315"/>
    <property type="project" value="RGD"/>
</dbReference>
<dbReference type="GO" id="GO:0042711">
    <property type="term" value="P:maternal behavior"/>
    <property type="evidence" value="ECO:0000315"/>
    <property type="project" value="RGD"/>
</dbReference>
<dbReference type="GO" id="GO:0014902">
    <property type="term" value="P:myotube differentiation"/>
    <property type="evidence" value="ECO:0000270"/>
    <property type="project" value="RGD"/>
</dbReference>
<dbReference type="GO" id="GO:0007621">
    <property type="term" value="P:negative regulation of female receptivity"/>
    <property type="evidence" value="ECO:0000315"/>
    <property type="project" value="RGD"/>
</dbReference>
<dbReference type="GO" id="GO:0051970">
    <property type="term" value="P:negative regulation of transmission of nerve impulse"/>
    <property type="evidence" value="ECO:0000315"/>
    <property type="project" value="RGD"/>
</dbReference>
<dbReference type="GO" id="GO:0045777">
    <property type="term" value="P:positive regulation of blood pressure"/>
    <property type="evidence" value="ECO:0000315"/>
    <property type="project" value="RGD"/>
</dbReference>
<dbReference type="GO" id="GO:0030307">
    <property type="term" value="P:positive regulation of cell growth"/>
    <property type="evidence" value="ECO:0000315"/>
    <property type="project" value="RGD"/>
</dbReference>
<dbReference type="GO" id="GO:0008284">
    <property type="term" value="P:positive regulation of cell population proliferation"/>
    <property type="evidence" value="ECO:0000315"/>
    <property type="project" value="RGD"/>
</dbReference>
<dbReference type="GO" id="GO:0032849">
    <property type="term" value="P:positive regulation of cellular pH reduction"/>
    <property type="evidence" value="ECO:0000315"/>
    <property type="project" value="RGD"/>
</dbReference>
<dbReference type="GO" id="GO:0007204">
    <property type="term" value="P:positive regulation of cytosolic calcium ion concentration"/>
    <property type="evidence" value="ECO:0000315"/>
    <property type="project" value="RGD"/>
</dbReference>
<dbReference type="GO" id="GO:0014049">
    <property type="term" value="P:positive regulation of glutamate secretion"/>
    <property type="evidence" value="ECO:0000315"/>
    <property type="project" value="RGD"/>
</dbReference>
<dbReference type="GO" id="GO:0045819">
    <property type="term" value="P:positive regulation of glycogen catabolic process"/>
    <property type="evidence" value="ECO:0000303"/>
    <property type="project" value="UniProtKB"/>
</dbReference>
<dbReference type="GO" id="GO:0010460">
    <property type="term" value="P:positive regulation of heart rate"/>
    <property type="evidence" value="ECO:0000315"/>
    <property type="project" value="RGD"/>
</dbReference>
<dbReference type="GO" id="GO:0031394">
    <property type="term" value="P:positive regulation of prostaglandin biosynthetic process"/>
    <property type="evidence" value="ECO:0000315"/>
    <property type="project" value="RGD"/>
</dbReference>
<dbReference type="GO" id="GO:0003084">
    <property type="term" value="P:positive regulation of systemic arterial blood pressure"/>
    <property type="evidence" value="ECO:0000315"/>
    <property type="project" value="RGD"/>
</dbReference>
<dbReference type="GO" id="GO:0035810">
    <property type="term" value="P:positive regulation of urine volume"/>
    <property type="evidence" value="ECO:0000303"/>
    <property type="project" value="UniProtKB"/>
</dbReference>
<dbReference type="GO" id="GO:0045907">
    <property type="term" value="P:positive regulation of vasoconstriction"/>
    <property type="evidence" value="ECO:0000315"/>
    <property type="project" value="RGD"/>
</dbReference>
<dbReference type="GO" id="GO:0008217">
    <property type="term" value="P:regulation of blood pressure"/>
    <property type="evidence" value="ECO:0000266"/>
    <property type="project" value="RGD"/>
</dbReference>
<dbReference type="GO" id="GO:0051459">
    <property type="term" value="P:regulation of corticotropin secretion"/>
    <property type="evidence" value="ECO:0000303"/>
    <property type="project" value="UniProtKB"/>
</dbReference>
<dbReference type="GO" id="GO:0001992">
    <property type="term" value="P:regulation of systemic arterial blood pressure by vasopressin"/>
    <property type="evidence" value="ECO:0000266"/>
    <property type="project" value="RGD"/>
</dbReference>
<dbReference type="GO" id="GO:0051412">
    <property type="term" value="P:response to corticosterone"/>
    <property type="evidence" value="ECO:0000270"/>
    <property type="project" value="RGD"/>
</dbReference>
<dbReference type="GO" id="GO:0035176">
    <property type="term" value="P:social behavior"/>
    <property type="evidence" value="ECO:0000314"/>
    <property type="project" value="UniProtKB"/>
</dbReference>
<dbReference type="GO" id="GO:0042713">
    <property type="term" value="P:sperm ejaculation"/>
    <property type="evidence" value="ECO:0000315"/>
    <property type="project" value="RGD"/>
</dbReference>
<dbReference type="GO" id="GO:0021537">
    <property type="term" value="P:telencephalon development"/>
    <property type="evidence" value="ECO:0000270"/>
    <property type="project" value="RGD"/>
</dbReference>
<dbReference type="CDD" id="cd15385">
    <property type="entry name" value="7tmA_V1aR"/>
    <property type="match status" value="1"/>
</dbReference>
<dbReference type="FunFam" id="1.20.1070.10:FF:000094">
    <property type="entry name" value="Vasopressin V1a receptor"/>
    <property type="match status" value="1"/>
</dbReference>
<dbReference type="Gene3D" id="1.20.1070.10">
    <property type="entry name" value="Rhodopsin 7-helix transmembrane proteins"/>
    <property type="match status" value="1"/>
</dbReference>
<dbReference type="InterPro" id="IPR000276">
    <property type="entry name" value="GPCR_Rhodpsn"/>
</dbReference>
<dbReference type="InterPro" id="IPR017452">
    <property type="entry name" value="GPCR_Rhodpsn_7TM"/>
</dbReference>
<dbReference type="InterPro" id="IPR015076">
    <property type="entry name" value="V1R_C"/>
</dbReference>
<dbReference type="InterPro" id="IPR001817">
    <property type="entry name" value="Vasoprsn_rcpt"/>
</dbReference>
<dbReference type="InterPro" id="IPR001224">
    <property type="entry name" value="Vprs_V1A_rcpt"/>
</dbReference>
<dbReference type="PANTHER" id="PTHR24241">
    <property type="entry name" value="NEUROPEPTIDE RECEPTOR-RELATED G-PROTEIN COUPLED RECEPTOR"/>
    <property type="match status" value="1"/>
</dbReference>
<dbReference type="PANTHER" id="PTHR24241:SF17">
    <property type="entry name" value="VASOPRESSIN V1A RECEPTOR"/>
    <property type="match status" value="1"/>
</dbReference>
<dbReference type="Pfam" id="PF00001">
    <property type="entry name" value="7tm_1"/>
    <property type="match status" value="1"/>
</dbReference>
<dbReference type="Pfam" id="PF08983">
    <property type="entry name" value="V1R_C"/>
    <property type="match status" value="1"/>
</dbReference>
<dbReference type="PRINTS" id="PR00237">
    <property type="entry name" value="GPCRRHODOPSN"/>
</dbReference>
<dbReference type="PRINTS" id="PR00896">
    <property type="entry name" value="VASOPRESSINR"/>
</dbReference>
<dbReference type="PRINTS" id="PR00752">
    <property type="entry name" value="VASOPRSNV1AR"/>
</dbReference>
<dbReference type="SMART" id="SM01164">
    <property type="entry name" value="DUF1856"/>
    <property type="match status" value="1"/>
</dbReference>
<dbReference type="SUPFAM" id="SSF81321">
    <property type="entry name" value="Family A G protein-coupled receptor-like"/>
    <property type="match status" value="1"/>
</dbReference>
<dbReference type="PROSITE" id="PS00237">
    <property type="entry name" value="G_PROTEIN_RECEP_F1_1"/>
    <property type="match status" value="1"/>
</dbReference>
<dbReference type="PROSITE" id="PS50262">
    <property type="entry name" value="G_PROTEIN_RECEP_F1_2"/>
    <property type="match status" value="1"/>
</dbReference>
<proteinExistence type="evidence at protein level"/>
<keyword id="KW-1003">Cell membrane</keyword>
<keyword id="KW-0968">Cytoplasmic vesicle</keyword>
<keyword id="KW-1015">Disulfide bond</keyword>
<keyword id="KW-0297">G-protein coupled receptor</keyword>
<keyword id="KW-0325">Glycoprotein</keyword>
<keyword id="KW-0449">Lipoprotein</keyword>
<keyword id="KW-0472">Membrane</keyword>
<keyword id="KW-0564">Palmitate</keyword>
<keyword id="KW-0597">Phosphoprotein</keyword>
<keyword id="KW-0675">Receptor</keyword>
<keyword id="KW-1185">Reference proteome</keyword>
<keyword id="KW-0807">Transducer</keyword>
<keyword id="KW-0812">Transmembrane</keyword>
<keyword id="KW-1133">Transmembrane helix</keyword>
<accession>P30560</accession>
<accession>Q5M8D1</accession>
<accession>Q62874</accession>
<accession>Q9QW18</accession>
<feature type="chain" id="PRO_0000070201" description="Vasopressin V1a receptor">
    <location>
        <begin position="1"/>
        <end position="424"/>
    </location>
</feature>
<feature type="topological domain" description="Extracellular" evidence="2">
    <location>
        <begin position="1"/>
        <end position="52"/>
    </location>
</feature>
<feature type="transmembrane region" description="Helical; Name=1" evidence="2">
    <location>
        <begin position="53"/>
        <end position="76"/>
    </location>
</feature>
<feature type="topological domain" description="Cytoplasmic" evidence="2">
    <location>
        <begin position="77"/>
        <end position="88"/>
    </location>
</feature>
<feature type="transmembrane region" description="Helical; Name=2" evidence="2">
    <location>
        <begin position="89"/>
        <end position="110"/>
    </location>
</feature>
<feature type="topological domain" description="Extracellular" evidence="2">
    <location>
        <begin position="111"/>
        <end position="125"/>
    </location>
</feature>
<feature type="transmembrane region" description="Helical; Name=3" evidence="2">
    <location>
        <begin position="126"/>
        <end position="147"/>
    </location>
</feature>
<feature type="topological domain" description="Cytoplasmic" evidence="2">
    <location>
        <begin position="148"/>
        <end position="168"/>
    </location>
</feature>
<feature type="transmembrane region" description="Helical; Name=4" evidence="2">
    <location>
        <begin position="169"/>
        <end position="190"/>
    </location>
</feature>
<feature type="topological domain" description="Extracellular" evidence="2">
    <location>
        <begin position="191"/>
        <end position="220"/>
    </location>
</feature>
<feature type="transmembrane region" description="Helical; Name=5" evidence="2">
    <location>
        <begin position="221"/>
        <end position="241"/>
    </location>
</feature>
<feature type="topological domain" description="Cytoplasmic" evidence="2">
    <location>
        <begin position="242"/>
        <end position="299"/>
    </location>
</feature>
<feature type="transmembrane region" description="Helical; Name=6" evidence="2">
    <location>
        <begin position="300"/>
        <end position="319"/>
    </location>
</feature>
<feature type="topological domain" description="Extracellular" evidence="2">
    <location>
        <begin position="320"/>
        <end position="337"/>
    </location>
</feature>
<feature type="transmembrane region" description="Helical; Name=7" evidence="2">
    <location>
        <begin position="338"/>
        <end position="357"/>
    </location>
</feature>
<feature type="topological domain" description="Cytoplasmic" evidence="2">
    <location>
        <begin position="358"/>
        <end position="424"/>
    </location>
</feature>
<feature type="region of interest" description="Disordered" evidence="4">
    <location>
        <begin position="1"/>
        <end position="40"/>
    </location>
</feature>
<feature type="region of interest" description="Disordered" evidence="4">
    <location>
        <begin position="383"/>
        <end position="416"/>
    </location>
</feature>
<feature type="compositionally biased region" description="Polar residues" evidence="4">
    <location>
        <begin position="9"/>
        <end position="30"/>
    </location>
</feature>
<feature type="compositionally biased region" description="Polar residues" evidence="4">
    <location>
        <begin position="389"/>
        <end position="405"/>
    </location>
</feature>
<feature type="modified residue" description="Phosphoserine" evidence="1">
    <location>
        <position position="410"/>
    </location>
</feature>
<feature type="lipid moiety-binding region" description="S-palmitoyl cysteine" evidence="5">
    <location>
        <position position="371"/>
    </location>
</feature>
<feature type="lipid moiety-binding region" description="S-palmitoyl cysteine" evidence="5">
    <location>
        <position position="372"/>
    </location>
</feature>
<feature type="glycosylation site" description="N-linked (GlcNAc...) asparagine" evidence="2">
    <location>
        <position position="27"/>
    </location>
</feature>
<feature type="disulfide bond" evidence="3">
    <location>
        <begin position="124"/>
        <end position="205"/>
    </location>
</feature>
<feature type="mutagenesis site" description="Reduced ligand binding affinity." evidence="6">
    <original>N</original>
    <variation>Q</variation>
    <location>
        <position position="14"/>
    </location>
</feature>
<feature type="mutagenesis site" description="Reduced ligand binding affinity." evidence="6">
    <original>N</original>
    <variation>Q</variation>
    <location>
        <position position="27"/>
    </location>
</feature>
<feature type="mutagenesis site" description="No significant change in affinity for arginine vasopressin or oxytocin. Increased affinity for 1-deamino, D-Arg8-vasopressin." evidence="9">
    <original>Y</original>
    <variation>D</variation>
    <location>
        <position position="115"/>
    </location>
</feature>
<feature type="mutagenesis site" description="17-fold increase in affinity for oxytocin. No change in affinity for arginine vasopressin or 1-deamino, D-Arg8-vasopressin." evidence="9">
    <original>Y</original>
    <variation>F</variation>
    <location>
        <position position="115"/>
    </location>
</feature>
<feature type="mutagenesis site" description="50-fold decrease in affinity for arginine vasopressin. Little affect on affinity for oxytocin or 1-deamino, D-Arg8-vasopressin." evidence="9">
    <original>Y</original>
    <variation>L</variation>
    <location>
        <position position="115"/>
    </location>
</feature>
<feature type="mutagenesis site" description="Reduced palmitoylation, coupling to G protein unaffected. Abolished isoprenylation, coupling to G protein unaffected; when associated with G-372." evidence="5">
    <original>C</original>
    <variation>G</variation>
    <location>
        <position position="371"/>
    </location>
</feature>
<feature type="mutagenesis site" description="Reduced palmitoylation, coupling to G protein unaffected. Abolished isoprenylation, coupling to G protein unaffected; when associated with G-371." evidence="5">
    <original>C</original>
    <variation>G</variation>
    <location>
        <position position="372"/>
    </location>
</feature>
<feature type="sequence conflict" description="In Ref. 3 and 5." evidence="11" ref="3 5">
    <original>YR</original>
    <variation>SS</variation>
    <location>
        <begin position="115"/>
        <end position="116"/>
    </location>
</feature>
<feature type="sequence conflict" description="In Ref. 1; CAA77748." evidence="11" ref="1">
    <original>RQTSYSNNRSPTNSTGMWKDSPKSSKSIRFIPVST</original>
    <variation>KTDFLF</variation>
    <location>
        <begin position="390"/>
        <end position="424"/>
    </location>
</feature>
<name>V1AR_RAT</name>
<protein>
    <recommendedName>
        <fullName>Vasopressin V1a receptor</fullName>
        <shortName>V1aR</shortName>
    </recommendedName>
    <alternativeName>
        <fullName>AVPR V1a</fullName>
    </alternativeName>
    <alternativeName>
        <fullName>Antidiuretic hormone receptor 1a</fullName>
    </alternativeName>
    <alternativeName>
        <fullName>Vascular/hepatic-type arginine vasopressin receptor</fullName>
    </alternativeName>
</protein>